<keyword id="KW-0195">Cyclin</keyword>
<keyword id="KW-1185">Reference proteome</keyword>
<keyword id="KW-0678">Repressor</keyword>
<keyword id="KW-0804">Transcription</keyword>
<keyword id="KW-0805">Transcription regulation</keyword>
<dbReference type="EMBL" id="L07314">
    <property type="protein sequence ID" value="AAA74959.1"/>
    <property type="molecule type" value="Genomic_DNA"/>
</dbReference>
<dbReference type="EMBL" id="AL356815">
    <property type="protein sequence ID" value="CAB92634.1"/>
    <property type="molecule type" value="Genomic_DNA"/>
</dbReference>
<dbReference type="EMBL" id="CM002237">
    <property type="protein sequence ID" value="EAA27925.3"/>
    <property type="molecule type" value="Genomic_DNA"/>
</dbReference>
<dbReference type="PIR" id="S52974">
    <property type="entry name" value="S52974"/>
</dbReference>
<dbReference type="RefSeq" id="XP_957161.3">
    <property type="nucleotide sequence ID" value="XM_952068.3"/>
</dbReference>
<dbReference type="SMR" id="Q06712"/>
<dbReference type="STRING" id="367110.Q06712"/>
<dbReference type="PaxDb" id="5141-EFNCRP00000001709"/>
<dbReference type="EnsemblFungi" id="EAA27925">
    <property type="protein sequence ID" value="EAA27925"/>
    <property type="gene ID" value="NCU01738"/>
</dbReference>
<dbReference type="GeneID" id="3873354"/>
<dbReference type="KEGG" id="ncr:NCU01738"/>
<dbReference type="VEuPathDB" id="FungiDB:NCU01738"/>
<dbReference type="HOGENOM" id="CLU_023749_0_0_1"/>
<dbReference type="InParanoid" id="Q06712"/>
<dbReference type="OrthoDB" id="337735at2759"/>
<dbReference type="Proteomes" id="UP000001805">
    <property type="component" value="Chromosome 6, Linkage Group II"/>
</dbReference>
<dbReference type="GO" id="GO:0000307">
    <property type="term" value="C:cyclin-dependent protein kinase holoenzyme complex"/>
    <property type="evidence" value="ECO:0000318"/>
    <property type="project" value="GO_Central"/>
</dbReference>
<dbReference type="GO" id="GO:0005634">
    <property type="term" value="C:nucleus"/>
    <property type="evidence" value="ECO:0000318"/>
    <property type="project" value="GO_Central"/>
</dbReference>
<dbReference type="GO" id="GO:0016538">
    <property type="term" value="F:cyclin-dependent protein serine/threonine kinase regulator activity"/>
    <property type="evidence" value="ECO:0000318"/>
    <property type="project" value="GO_Central"/>
</dbReference>
<dbReference type="GO" id="GO:0019901">
    <property type="term" value="F:protein kinase binding"/>
    <property type="evidence" value="ECO:0007669"/>
    <property type="project" value="InterPro"/>
</dbReference>
<dbReference type="CDD" id="cd20558">
    <property type="entry name" value="CYCLIN_ScPCL7-like"/>
    <property type="match status" value="1"/>
</dbReference>
<dbReference type="Gene3D" id="1.10.472.10">
    <property type="entry name" value="Cyclin-like"/>
    <property type="match status" value="1"/>
</dbReference>
<dbReference type="InterPro" id="IPR036915">
    <property type="entry name" value="Cyclin-like_sf"/>
</dbReference>
<dbReference type="InterPro" id="IPR013922">
    <property type="entry name" value="Cyclin_PHO80-like"/>
</dbReference>
<dbReference type="PANTHER" id="PTHR15615">
    <property type="match status" value="1"/>
</dbReference>
<dbReference type="PANTHER" id="PTHR15615:SF117">
    <property type="entry name" value="PHO85 CYCLIN PHO80"/>
    <property type="match status" value="1"/>
</dbReference>
<dbReference type="Pfam" id="PF08613">
    <property type="entry name" value="Cyclin"/>
    <property type="match status" value="1"/>
</dbReference>
<dbReference type="SUPFAM" id="SSF47954">
    <property type="entry name" value="Cyclin-like"/>
    <property type="match status" value="1"/>
</dbReference>
<sequence length="483" mass="51479">MLTRSPASAAATSPTTTVTVTVTAAATSPRPSRGAAPHGHFHYAPTPSLREAASRIPALSSRRQSATAPATSSTSLPISIQSRHGPAPVASHTSSPVASDPGLGFPPSSRPQRWAGVDVVAQYSPMEPMDYTTGALLSSQAASSSNNQAVARGSIESRPSHIPNTVGPMASHEEQASALASTSEATAAPIPHGPTVAVAVPPTPGVYSAAPQPHPLSHTPQTGTPVKRRNSQGDVTHNQVEAASAGQSGPHSPKRARLAPKIVSRRYEHCPVEDLVVLIAHMLGELIELNDEAAQKVGQRHNLTRFHSRTTPGISVLDYLHRLAKHAYLSPPILLSMVYYIDRLCALYSDFTINTLTVHRFLITAATVAAKGLSDSFLTNTLYARVGGVRVAELNMLELEFLHRVDWKIVPDPDVLVAYYGGLVARCPGYILECPEPEEADDEDEDEELDESDAIGDDDDDIDGEGGEREEETSSSQRDRHAT</sequence>
<name>PREG_NEUCR</name>
<reference key="1">
    <citation type="journal article" date="1993" name="Genetics">
        <title>Insertional mutagenesis in Neurospora crassa: cloning and molecular analysis of the preg+ gene controlling the activity of the transcriptional activator NUC-1.</title>
        <authorList>
            <person name="Kang S."/>
            <person name="Metzenberg R.L."/>
        </authorList>
    </citation>
    <scope>NUCLEOTIDE SEQUENCE [GENOMIC DNA]</scope>
    <scope>FUNCTION</scope>
    <scope>MUTAGENESIS OF LEU-394 AND GLU-398</scope>
    <source>
        <strain>ATCC 18889 / 74-OR8-1a / 40-21 / DSM 1258 / FGSC 988</strain>
    </source>
</reference>
<reference key="2">
    <citation type="journal article" date="2003" name="Nucleic Acids Res.">
        <title>What's in the genome of a filamentous fungus? Analysis of the Neurospora genome sequence.</title>
        <authorList>
            <person name="Mannhaupt G."/>
            <person name="Montrone C."/>
            <person name="Haase D."/>
            <person name="Mewes H.-W."/>
            <person name="Aign V."/>
            <person name="Hoheisel J.D."/>
            <person name="Fartmann B."/>
            <person name="Nyakatura G."/>
            <person name="Kempken F."/>
            <person name="Maier J."/>
            <person name="Schulte U."/>
        </authorList>
    </citation>
    <scope>NUCLEOTIDE SEQUENCE [LARGE SCALE GENOMIC DNA]</scope>
    <source>
        <strain>ATCC 24698 / 74-OR23-1A / CBS 708.71 / DSM 1257 / FGSC 987</strain>
    </source>
</reference>
<reference key="3">
    <citation type="journal article" date="2003" name="Nature">
        <title>The genome sequence of the filamentous fungus Neurospora crassa.</title>
        <authorList>
            <person name="Galagan J.E."/>
            <person name="Calvo S.E."/>
            <person name="Borkovich K.A."/>
            <person name="Selker E.U."/>
            <person name="Read N.D."/>
            <person name="Jaffe D.B."/>
            <person name="FitzHugh W."/>
            <person name="Ma L.-J."/>
            <person name="Smirnov S."/>
            <person name="Purcell S."/>
            <person name="Rehman B."/>
            <person name="Elkins T."/>
            <person name="Engels R."/>
            <person name="Wang S."/>
            <person name="Nielsen C.B."/>
            <person name="Butler J."/>
            <person name="Endrizzi M."/>
            <person name="Qui D."/>
            <person name="Ianakiev P."/>
            <person name="Bell-Pedersen D."/>
            <person name="Nelson M.A."/>
            <person name="Werner-Washburne M."/>
            <person name="Selitrennikoff C.P."/>
            <person name="Kinsey J.A."/>
            <person name="Braun E.L."/>
            <person name="Zelter A."/>
            <person name="Schulte U."/>
            <person name="Kothe G.O."/>
            <person name="Jedd G."/>
            <person name="Mewes H.-W."/>
            <person name="Staben C."/>
            <person name="Marcotte E."/>
            <person name="Greenberg D."/>
            <person name="Roy A."/>
            <person name="Foley K."/>
            <person name="Naylor J."/>
            <person name="Stange-Thomann N."/>
            <person name="Barrett R."/>
            <person name="Gnerre S."/>
            <person name="Kamal M."/>
            <person name="Kamvysselis M."/>
            <person name="Mauceli E.W."/>
            <person name="Bielke C."/>
            <person name="Rudd S."/>
            <person name="Frishman D."/>
            <person name="Krystofova S."/>
            <person name="Rasmussen C."/>
            <person name="Metzenberg R.L."/>
            <person name="Perkins D.D."/>
            <person name="Kroken S."/>
            <person name="Cogoni C."/>
            <person name="Macino G."/>
            <person name="Catcheside D.E.A."/>
            <person name="Li W."/>
            <person name="Pratt R.J."/>
            <person name="Osmani S.A."/>
            <person name="DeSouza C.P.C."/>
            <person name="Glass N.L."/>
            <person name="Orbach M.J."/>
            <person name="Berglund J.A."/>
            <person name="Voelker R."/>
            <person name="Yarden O."/>
            <person name="Plamann M."/>
            <person name="Seiler S."/>
            <person name="Dunlap J.C."/>
            <person name="Radford A."/>
            <person name="Aramayo R."/>
            <person name="Natvig D.O."/>
            <person name="Alex L.A."/>
            <person name="Mannhaupt G."/>
            <person name="Ebbole D.J."/>
            <person name="Freitag M."/>
            <person name="Paulsen I."/>
            <person name="Sachs M.S."/>
            <person name="Lander E.S."/>
            <person name="Nusbaum C."/>
            <person name="Birren B.W."/>
        </authorList>
    </citation>
    <scope>NUCLEOTIDE SEQUENCE [LARGE SCALE GENOMIC DNA]</scope>
    <source>
        <strain>ATCC 24698 / 74-OR23-1A / CBS 708.71 / DSM 1257 / FGSC 987</strain>
    </source>
</reference>
<gene>
    <name type="primary">preg</name>
    <name type="ORF">B24H17.120</name>
    <name type="ORF">NCU01738</name>
</gene>
<feature type="chain" id="PRO_0000080508" description="Nuc-1 negative regulatory protein preg">
    <location>
        <begin position="1"/>
        <end position="483"/>
    </location>
</feature>
<feature type="region of interest" description="Disordered" evidence="1">
    <location>
        <begin position="1"/>
        <end position="112"/>
    </location>
</feature>
<feature type="region of interest" description="Disordered" evidence="1">
    <location>
        <begin position="164"/>
        <end position="234"/>
    </location>
</feature>
<feature type="region of interest" description="Disordered" evidence="1">
    <location>
        <begin position="434"/>
        <end position="483"/>
    </location>
</feature>
<feature type="compositionally biased region" description="Low complexity" evidence="1">
    <location>
        <begin position="1"/>
        <end position="32"/>
    </location>
</feature>
<feature type="compositionally biased region" description="Low complexity" evidence="1">
    <location>
        <begin position="60"/>
        <end position="80"/>
    </location>
</feature>
<feature type="compositionally biased region" description="Low complexity" evidence="1">
    <location>
        <begin position="176"/>
        <end position="200"/>
    </location>
</feature>
<feature type="compositionally biased region" description="Acidic residues" evidence="1">
    <location>
        <begin position="435"/>
        <end position="473"/>
    </location>
</feature>
<feature type="mutagenesis site" description="In ML207; loss of function." evidence="2">
    <original>L</original>
    <variation>P</variation>
    <location>
        <position position="394"/>
    </location>
</feature>
<feature type="mutagenesis site" description="In ML178; loss of function." evidence="2">
    <original>E</original>
    <variation>Q</variation>
    <location>
        <position position="398"/>
    </location>
</feature>
<evidence type="ECO:0000256" key="1">
    <source>
        <dbReference type="SAM" id="MobiDB-lite"/>
    </source>
</evidence>
<evidence type="ECO:0000269" key="2">
    <source>
    </source>
</evidence>
<evidence type="ECO:0000305" key="3"/>
<proteinExistence type="evidence at protein level"/>
<comment type="function">
    <text evidence="2">Negative regulator, together with pgov, of the transcriptional activator nuc-1, which controls the expression of phosphorous acquisition enzymes.</text>
</comment>
<comment type="similarity">
    <text evidence="3">Belongs to the cyclin family.</text>
</comment>
<protein>
    <recommendedName>
        <fullName>Nuc-1 negative regulatory protein preg</fullName>
    </recommendedName>
    <alternativeName>
        <fullName>Phosphatase regulation protein</fullName>
    </alternativeName>
</protein>
<accession>Q06712</accession>
<accession>Q7RV69</accession>
<organism>
    <name type="scientific">Neurospora crassa (strain ATCC 24698 / 74-OR23-1A / CBS 708.71 / DSM 1257 / FGSC 987)</name>
    <dbReference type="NCBI Taxonomy" id="367110"/>
    <lineage>
        <taxon>Eukaryota</taxon>
        <taxon>Fungi</taxon>
        <taxon>Dikarya</taxon>
        <taxon>Ascomycota</taxon>
        <taxon>Pezizomycotina</taxon>
        <taxon>Sordariomycetes</taxon>
        <taxon>Sordariomycetidae</taxon>
        <taxon>Sordariales</taxon>
        <taxon>Sordariaceae</taxon>
        <taxon>Neurospora</taxon>
    </lineage>
</organism>